<sequence>MKLWGGRFTKETNQLVHNFNASISFDQKFYVQDIRGSIAHVTMLAKQGILNDEEKNKIIDGLNGIRDDIESGSLVIDSTYEDIHSFVEAHLISRIEEIGKKLHTGRSRNDQVALDMKLYTRDEITVLDELLRDLLFELYSLMKEHTETYMPGFTHLQKAQPITLSHHMSAYFEMFRRDRDRLSDIFKRMNTCPLGAGALAGTTYPLDRAYTASLLSFTEPTRNSMDSVSDRDYLIELLSALSTIMMHLSRFSEEIIIWNTNEYRFVEIDDAYSTGSSIMPQKKNPDIAELVRGKTGRVYGALMSLLTTMKGLPLAYNKDMQEDKELTFDAIDTVKGCLSLFTGMIRTMKFNRDTMKASAVLGFTNATDAADYLVNHGVAFRDAHGIIGHLVLTCIEKNCSIEDLSLTELQAISPVFKEDIYDAISLKTCVEKRNTIGGPGVDAMNEVIKECAKYLENNPSIS</sequence>
<dbReference type="EC" id="4.3.2.1" evidence="1"/>
<dbReference type="EMBL" id="CP000885">
    <property type="protein sequence ID" value="ABX43363.1"/>
    <property type="molecule type" value="Genomic_DNA"/>
</dbReference>
<dbReference type="RefSeq" id="WP_012201014.1">
    <property type="nucleotide sequence ID" value="NC_010001.1"/>
</dbReference>
<dbReference type="SMR" id="A9KQ51"/>
<dbReference type="STRING" id="357809.Cphy_3006"/>
<dbReference type="KEGG" id="cpy:Cphy_3006"/>
<dbReference type="eggNOG" id="COG0165">
    <property type="taxonomic scope" value="Bacteria"/>
</dbReference>
<dbReference type="HOGENOM" id="CLU_027272_2_3_9"/>
<dbReference type="OrthoDB" id="9769623at2"/>
<dbReference type="UniPathway" id="UPA00068">
    <property type="reaction ID" value="UER00114"/>
</dbReference>
<dbReference type="Proteomes" id="UP000000370">
    <property type="component" value="Chromosome"/>
</dbReference>
<dbReference type="GO" id="GO:0005829">
    <property type="term" value="C:cytosol"/>
    <property type="evidence" value="ECO:0007669"/>
    <property type="project" value="TreeGrafter"/>
</dbReference>
<dbReference type="GO" id="GO:0004056">
    <property type="term" value="F:argininosuccinate lyase activity"/>
    <property type="evidence" value="ECO:0007669"/>
    <property type="project" value="UniProtKB-UniRule"/>
</dbReference>
<dbReference type="GO" id="GO:0042450">
    <property type="term" value="P:arginine biosynthetic process via ornithine"/>
    <property type="evidence" value="ECO:0007669"/>
    <property type="project" value="InterPro"/>
</dbReference>
<dbReference type="GO" id="GO:0006526">
    <property type="term" value="P:L-arginine biosynthetic process"/>
    <property type="evidence" value="ECO:0007669"/>
    <property type="project" value="UniProtKB-UniRule"/>
</dbReference>
<dbReference type="CDD" id="cd01359">
    <property type="entry name" value="Argininosuccinate_lyase"/>
    <property type="match status" value="1"/>
</dbReference>
<dbReference type="FunFam" id="1.10.275.10:FF:000002">
    <property type="entry name" value="Argininosuccinate lyase"/>
    <property type="match status" value="1"/>
</dbReference>
<dbReference type="FunFam" id="1.10.40.30:FF:000001">
    <property type="entry name" value="Argininosuccinate lyase"/>
    <property type="match status" value="1"/>
</dbReference>
<dbReference type="FunFam" id="1.20.200.10:FF:000002">
    <property type="entry name" value="Argininosuccinate lyase"/>
    <property type="match status" value="1"/>
</dbReference>
<dbReference type="Gene3D" id="1.10.40.30">
    <property type="entry name" value="Fumarase/aspartase (C-terminal domain)"/>
    <property type="match status" value="1"/>
</dbReference>
<dbReference type="Gene3D" id="1.20.200.10">
    <property type="entry name" value="Fumarase/aspartase (Central domain)"/>
    <property type="match status" value="1"/>
</dbReference>
<dbReference type="Gene3D" id="1.10.275.10">
    <property type="entry name" value="Fumarase/aspartase (N-terminal domain)"/>
    <property type="match status" value="1"/>
</dbReference>
<dbReference type="HAMAP" id="MF_00006">
    <property type="entry name" value="Arg_succ_lyase"/>
    <property type="match status" value="1"/>
</dbReference>
<dbReference type="InterPro" id="IPR029419">
    <property type="entry name" value="Arg_succ_lyase_C"/>
</dbReference>
<dbReference type="InterPro" id="IPR009049">
    <property type="entry name" value="Argininosuccinate_lyase"/>
</dbReference>
<dbReference type="InterPro" id="IPR024083">
    <property type="entry name" value="Fumarase/histidase_N"/>
</dbReference>
<dbReference type="InterPro" id="IPR020557">
    <property type="entry name" value="Fumarate_lyase_CS"/>
</dbReference>
<dbReference type="InterPro" id="IPR000362">
    <property type="entry name" value="Fumarate_lyase_fam"/>
</dbReference>
<dbReference type="InterPro" id="IPR022761">
    <property type="entry name" value="Fumarate_lyase_N"/>
</dbReference>
<dbReference type="InterPro" id="IPR008948">
    <property type="entry name" value="L-Aspartase-like"/>
</dbReference>
<dbReference type="NCBIfam" id="TIGR00838">
    <property type="entry name" value="argH"/>
    <property type="match status" value="1"/>
</dbReference>
<dbReference type="PANTHER" id="PTHR43814">
    <property type="entry name" value="ARGININOSUCCINATE LYASE"/>
    <property type="match status" value="1"/>
</dbReference>
<dbReference type="PANTHER" id="PTHR43814:SF1">
    <property type="entry name" value="ARGININOSUCCINATE LYASE"/>
    <property type="match status" value="1"/>
</dbReference>
<dbReference type="Pfam" id="PF14698">
    <property type="entry name" value="ASL_C2"/>
    <property type="match status" value="1"/>
</dbReference>
<dbReference type="Pfam" id="PF00206">
    <property type="entry name" value="Lyase_1"/>
    <property type="match status" value="1"/>
</dbReference>
<dbReference type="PRINTS" id="PR00145">
    <property type="entry name" value="ARGSUCLYASE"/>
</dbReference>
<dbReference type="PRINTS" id="PR00149">
    <property type="entry name" value="FUMRATELYASE"/>
</dbReference>
<dbReference type="SUPFAM" id="SSF48557">
    <property type="entry name" value="L-aspartase-like"/>
    <property type="match status" value="1"/>
</dbReference>
<dbReference type="PROSITE" id="PS00163">
    <property type="entry name" value="FUMARATE_LYASES"/>
    <property type="match status" value="1"/>
</dbReference>
<accession>A9KQ51</accession>
<comment type="catalytic activity">
    <reaction evidence="1">
        <text>2-(N(omega)-L-arginino)succinate = fumarate + L-arginine</text>
        <dbReference type="Rhea" id="RHEA:24020"/>
        <dbReference type="ChEBI" id="CHEBI:29806"/>
        <dbReference type="ChEBI" id="CHEBI:32682"/>
        <dbReference type="ChEBI" id="CHEBI:57472"/>
        <dbReference type="EC" id="4.3.2.1"/>
    </reaction>
</comment>
<comment type="pathway">
    <text evidence="1">Amino-acid biosynthesis; L-arginine biosynthesis; L-arginine from L-ornithine and carbamoyl phosphate: step 3/3.</text>
</comment>
<comment type="subcellular location">
    <subcellularLocation>
        <location evidence="1">Cytoplasm</location>
    </subcellularLocation>
</comment>
<comment type="similarity">
    <text evidence="1">Belongs to the lyase 1 family. Argininosuccinate lyase subfamily.</text>
</comment>
<feature type="chain" id="PRO_1000073844" description="Argininosuccinate lyase">
    <location>
        <begin position="1"/>
        <end position="462"/>
    </location>
</feature>
<proteinExistence type="inferred from homology"/>
<name>ARLY_LACP7</name>
<gene>
    <name evidence="1" type="primary">argH</name>
    <name type="ordered locus">Cphy_3006</name>
</gene>
<protein>
    <recommendedName>
        <fullName evidence="1">Argininosuccinate lyase</fullName>
        <shortName evidence="1">ASAL</shortName>
        <ecNumber evidence="1">4.3.2.1</ecNumber>
    </recommendedName>
    <alternativeName>
        <fullName evidence="1">Arginosuccinase</fullName>
    </alternativeName>
</protein>
<organism>
    <name type="scientific">Lachnoclostridium phytofermentans (strain ATCC 700394 / DSM 18823 / ISDg)</name>
    <name type="common">Clostridium phytofermentans</name>
    <dbReference type="NCBI Taxonomy" id="357809"/>
    <lineage>
        <taxon>Bacteria</taxon>
        <taxon>Bacillati</taxon>
        <taxon>Bacillota</taxon>
        <taxon>Clostridia</taxon>
        <taxon>Lachnospirales</taxon>
        <taxon>Lachnospiraceae</taxon>
    </lineage>
</organism>
<reference key="1">
    <citation type="submission" date="2007-11" db="EMBL/GenBank/DDBJ databases">
        <title>Complete genome sequence of Clostridium phytofermentans ISDg.</title>
        <authorList>
            <person name="Leschine S.B."/>
            <person name="Warnick T.A."/>
            <person name="Blanchard J.L."/>
            <person name="Schnell D.J."/>
            <person name="Petit E.L."/>
            <person name="LaTouf W.G."/>
            <person name="Copeland A."/>
            <person name="Lucas S."/>
            <person name="Lapidus A."/>
            <person name="Barry K."/>
            <person name="Glavina del Rio T."/>
            <person name="Dalin E."/>
            <person name="Tice H."/>
            <person name="Pitluck S."/>
            <person name="Kiss H."/>
            <person name="Brettin T."/>
            <person name="Bruce D."/>
            <person name="Detter J.C."/>
            <person name="Han C."/>
            <person name="Kuske C."/>
            <person name="Schmutz J."/>
            <person name="Larimer F."/>
            <person name="Land M."/>
            <person name="Hauser L."/>
            <person name="Kyrpides N."/>
            <person name="Kim E.A."/>
            <person name="Richardson P."/>
        </authorList>
    </citation>
    <scope>NUCLEOTIDE SEQUENCE [LARGE SCALE GENOMIC DNA]</scope>
    <source>
        <strain>ATCC 700394 / DSM 18823 / ISDg</strain>
    </source>
</reference>
<evidence type="ECO:0000255" key="1">
    <source>
        <dbReference type="HAMAP-Rule" id="MF_00006"/>
    </source>
</evidence>
<keyword id="KW-0028">Amino-acid biosynthesis</keyword>
<keyword id="KW-0055">Arginine biosynthesis</keyword>
<keyword id="KW-0963">Cytoplasm</keyword>
<keyword id="KW-0456">Lyase</keyword>
<keyword id="KW-1185">Reference proteome</keyword>